<evidence type="ECO:0000255" key="1">
    <source>
        <dbReference type="HAMAP-Rule" id="MF_01698"/>
    </source>
</evidence>
<protein>
    <recommendedName>
        <fullName evidence="1">Mycothiol acetyltransferase</fullName>
        <shortName evidence="1">MSH acetyltransferase</shortName>
        <ecNumber evidence="1">2.3.1.189</ecNumber>
    </recommendedName>
    <alternativeName>
        <fullName evidence="1">Mycothiol synthase</fullName>
    </alternativeName>
</protein>
<comment type="function">
    <text evidence="1">Catalyzes the transfer of acetyl from acetyl-CoA to desacetylmycothiol (Cys-GlcN-Ins) to form mycothiol.</text>
</comment>
<comment type="catalytic activity">
    <reaction evidence="1">
        <text>1D-myo-inositol 2-(L-cysteinylamino)-2-deoxy-alpha-D-glucopyranoside + acetyl-CoA = mycothiol + CoA + H(+)</text>
        <dbReference type="Rhea" id="RHEA:26172"/>
        <dbReference type="ChEBI" id="CHEBI:15378"/>
        <dbReference type="ChEBI" id="CHEBI:16768"/>
        <dbReference type="ChEBI" id="CHEBI:57287"/>
        <dbReference type="ChEBI" id="CHEBI:57288"/>
        <dbReference type="ChEBI" id="CHEBI:58887"/>
        <dbReference type="EC" id="2.3.1.189"/>
    </reaction>
</comment>
<comment type="subunit">
    <text evidence="1">Monomer.</text>
</comment>
<comment type="similarity">
    <text evidence="1">Belongs to the acetyltransferase family. MshD subfamily.</text>
</comment>
<sequence length="297" mass="31910">MADLTWHDALDPEQAEEITRLLAEAEEVDGVAPVGEAVHLRLRPGASGSAHLLARADGVLAGYAHLDLLGDSDGNLVAELAVRPGSRRAGVGSELAGALLGAAADRGKPVRFWAHGDREGASGLAARLGARRVRELWVMRRELAGLPEVPPLPEGVALRSFEPGRDEDAVVRVNARAFSWHPEQGAMTADDVRLKEAEDWFDADGFLLAVDGADRLLGFHWTKRHDESMGEVYVVGVDPDAQGGGLGKALTLAGLVHLKSTGLRDVHLYVESDNSPAVRVYTRLGFSRWKADVQYAL</sequence>
<keyword id="KW-0012">Acyltransferase</keyword>
<keyword id="KW-1185">Reference proteome</keyword>
<keyword id="KW-0677">Repeat</keyword>
<keyword id="KW-0808">Transferase</keyword>
<proteinExistence type="inferred from homology"/>
<feature type="chain" id="PRO_0000400236" description="Mycothiol acetyltransferase">
    <location>
        <begin position="1"/>
        <end position="297"/>
    </location>
</feature>
<feature type="domain" description="N-acetyltransferase 1" evidence="1">
    <location>
        <begin position="8"/>
        <end position="153"/>
    </location>
</feature>
<feature type="domain" description="N-acetyltransferase 2" evidence="1">
    <location>
        <begin position="156"/>
        <end position="297"/>
    </location>
</feature>
<feature type="binding site" evidence="1">
    <location>
        <position position="36"/>
    </location>
    <ligand>
        <name>1D-myo-inositol 2-(L-cysteinylamino)-2-deoxy-alpha-D-glucopyranoside</name>
        <dbReference type="ChEBI" id="CHEBI:58887"/>
    </ligand>
</feature>
<feature type="binding site" evidence="1">
    <location>
        <begin position="80"/>
        <end position="82"/>
    </location>
    <ligand>
        <name>acetyl-CoA</name>
        <dbReference type="ChEBI" id="CHEBI:57288"/>
        <label>1</label>
    </ligand>
</feature>
<feature type="binding site" evidence="1">
    <location>
        <position position="183"/>
    </location>
    <ligand>
        <name>1D-myo-inositol 2-(L-cysteinylamino)-2-deoxy-alpha-D-glucopyranoside</name>
        <dbReference type="ChEBI" id="CHEBI:58887"/>
    </ligand>
</feature>
<feature type="binding site" evidence="1">
    <location>
        <position position="223"/>
    </location>
    <ligand>
        <name>1D-myo-inositol 2-(L-cysteinylamino)-2-deoxy-alpha-D-glucopyranoside</name>
        <dbReference type="ChEBI" id="CHEBI:58887"/>
    </ligand>
</feature>
<feature type="binding site" evidence="1">
    <location>
        <position position="231"/>
    </location>
    <ligand>
        <name>1D-myo-inositol 2-(L-cysteinylamino)-2-deoxy-alpha-D-glucopyranoside</name>
        <dbReference type="ChEBI" id="CHEBI:58887"/>
    </ligand>
</feature>
<feature type="binding site" evidence="1">
    <location>
        <begin position="235"/>
        <end position="237"/>
    </location>
    <ligand>
        <name>acetyl-CoA</name>
        <dbReference type="ChEBI" id="CHEBI:57288"/>
        <label>2</label>
    </ligand>
</feature>
<feature type="binding site" evidence="1">
    <location>
        <begin position="242"/>
        <end position="248"/>
    </location>
    <ligand>
        <name>acetyl-CoA</name>
        <dbReference type="ChEBI" id="CHEBI:57288"/>
        <label>2</label>
    </ligand>
</feature>
<feature type="binding site" evidence="1">
    <location>
        <position position="269"/>
    </location>
    <ligand>
        <name>1D-myo-inositol 2-(L-cysteinylamino)-2-deoxy-alpha-D-glucopyranoside</name>
        <dbReference type="ChEBI" id="CHEBI:58887"/>
    </ligand>
</feature>
<feature type="binding site" evidence="1">
    <location>
        <begin position="274"/>
        <end position="279"/>
    </location>
    <ligand>
        <name>acetyl-CoA</name>
        <dbReference type="ChEBI" id="CHEBI:57288"/>
        <label>2</label>
    </ligand>
</feature>
<accession>C6WPR7</accession>
<gene>
    <name evidence="1" type="primary">mshD</name>
    <name type="ordered locus">Amir_6822</name>
</gene>
<reference key="1">
    <citation type="journal article" date="2009" name="Stand. Genomic Sci.">
        <title>Complete genome sequence of Actinosynnema mirum type strain (101).</title>
        <authorList>
            <person name="Land M."/>
            <person name="Lapidus A."/>
            <person name="Mayilraj S."/>
            <person name="Chen F."/>
            <person name="Copeland A."/>
            <person name="Del Rio T.G."/>
            <person name="Nolan M."/>
            <person name="Lucas S."/>
            <person name="Tice H."/>
            <person name="Cheng J.F."/>
            <person name="Chertkov O."/>
            <person name="Bruce D."/>
            <person name="Goodwin L."/>
            <person name="Pitluck S."/>
            <person name="Rohde M."/>
            <person name="Goker M."/>
            <person name="Pati A."/>
            <person name="Ivanova N."/>
            <person name="Mavromatis K."/>
            <person name="Chen A."/>
            <person name="Palaniappan K."/>
            <person name="Hauser L."/>
            <person name="Chang Y.J."/>
            <person name="Jeffries C.C."/>
            <person name="Brettin T."/>
            <person name="Detter J.C."/>
            <person name="Han C."/>
            <person name="Chain P."/>
            <person name="Tindall B.J."/>
            <person name="Bristow J."/>
            <person name="Eisen J.A."/>
            <person name="Markowitz V."/>
            <person name="Hugenholtz P."/>
            <person name="Kyrpides N.C."/>
            <person name="Klenk H.P."/>
        </authorList>
    </citation>
    <scope>NUCLEOTIDE SEQUENCE [LARGE SCALE GENOMIC DNA]</scope>
    <source>
        <strain>ATCC 29888 / DSM 43827 / JCM 3225 / NBRC 14064 / NCIMB 13271 / NRRL B-12336 / IMRU 3971 / 101</strain>
    </source>
</reference>
<name>MSHD_ACTMD</name>
<organism>
    <name type="scientific">Actinosynnema mirum (strain ATCC 29888 / DSM 43827 / JCM 3225 / NBRC 14064 / NCIMB 13271 / NRRL B-12336 / IMRU 3971 / 101)</name>
    <dbReference type="NCBI Taxonomy" id="446462"/>
    <lineage>
        <taxon>Bacteria</taxon>
        <taxon>Bacillati</taxon>
        <taxon>Actinomycetota</taxon>
        <taxon>Actinomycetes</taxon>
        <taxon>Pseudonocardiales</taxon>
        <taxon>Pseudonocardiaceae</taxon>
        <taxon>Actinosynnema</taxon>
    </lineage>
</organism>
<dbReference type="EC" id="2.3.1.189" evidence="1"/>
<dbReference type="EMBL" id="CP001630">
    <property type="protein sequence ID" value="ACU40618.1"/>
    <property type="molecule type" value="Genomic_DNA"/>
</dbReference>
<dbReference type="RefSeq" id="WP_015805495.1">
    <property type="nucleotide sequence ID" value="NC_013093.1"/>
</dbReference>
<dbReference type="SMR" id="C6WPR7"/>
<dbReference type="STRING" id="446462.Amir_6822"/>
<dbReference type="KEGG" id="ami:Amir_6822"/>
<dbReference type="eggNOG" id="COG0456">
    <property type="taxonomic scope" value="Bacteria"/>
</dbReference>
<dbReference type="HOGENOM" id="CLU_068014_0_0_11"/>
<dbReference type="OrthoDB" id="3208058at2"/>
<dbReference type="Proteomes" id="UP000002213">
    <property type="component" value="Chromosome"/>
</dbReference>
<dbReference type="GO" id="GO:0035447">
    <property type="term" value="F:mycothiol synthase activity"/>
    <property type="evidence" value="ECO:0007669"/>
    <property type="project" value="UniProtKB-UniRule"/>
</dbReference>
<dbReference type="GO" id="GO:0010125">
    <property type="term" value="P:mycothiol biosynthetic process"/>
    <property type="evidence" value="ECO:0007669"/>
    <property type="project" value="UniProtKB-UniRule"/>
</dbReference>
<dbReference type="CDD" id="cd04301">
    <property type="entry name" value="NAT_SF"/>
    <property type="match status" value="1"/>
</dbReference>
<dbReference type="Gene3D" id="3.40.630.30">
    <property type="match status" value="1"/>
</dbReference>
<dbReference type="HAMAP" id="MF_01698">
    <property type="entry name" value="MshD"/>
    <property type="match status" value="1"/>
</dbReference>
<dbReference type="InterPro" id="IPR016181">
    <property type="entry name" value="Acyl_CoA_acyltransferase"/>
</dbReference>
<dbReference type="InterPro" id="IPR050832">
    <property type="entry name" value="Bact_Acetyltransf"/>
</dbReference>
<dbReference type="InterPro" id="IPR000182">
    <property type="entry name" value="GNAT_dom"/>
</dbReference>
<dbReference type="InterPro" id="IPR017813">
    <property type="entry name" value="Mycothiol_AcTrfase"/>
</dbReference>
<dbReference type="NCBIfam" id="TIGR03448">
    <property type="entry name" value="mycothiol_MshD"/>
    <property type="match status" value="1"/>
</dbReference>
<dbReference type="PANTHER" id="PTHR43877">
    <property type="entry name" value="AMINOALKYLPHOSPHONATE N-ACETYLTRANSFERASE-RELATED-RELATED"/>
    <property type="match status" value="1"/>
</dbReference>
<dbReference type="Pfam" id="PF00583">
    <property type="entry name" value="Acetyltransf_1"/>
    <property type="match status" value="2"/>
</dbReference>
<dbReference type="PIRSF" id="PIRSF021524">
    <property type="entry name" value="MSH_acetyltransferase"/>
    <property type="match status" value="1"/>
</dbReference>
<dbReference type="SUPFAM" id="SSF55729">
    <property type="entry name" value="Acyl-CoA N-acyltransferases (Nat)"/>
    <property type="match status" value="1"/>
</dbReference>
<dbReference type="PROSITE" id="PS51186">
    <property type="entry name" value="GNAT"/>
    <property type="match status" value="2"/>
</dbReference>